<protein>
    <recommendedName>
        <fullName>Putative uncharacterized transmembrane protein DDB_G0281105</fullName>
    </recommendedName>
</protein>
<dbReference type="EMBL" id="AAFI02000040">
    <property type="protein sequence ID" value="EAL66849.1"/>
    <property type="molecule type" value="Genomic_DNA"/>
</dbReference>
<dbReference type="RefSeq" id="XP_640821.1">
    <property type="nucleotide sequence ID" value="XM_635729.1"/>
</dbReference>
<dbReference type="SMR" id="Q54UF5"/>
<dbReference type="BioGRID" id="1247878">
    <property type="interactions" value="1"/>
</dbReference>
<dbReference type="PaxDb" id="44689-DDB0204017"/>
<dbReference type="EnsemblProtists" id="EAL66849">
    <property type="protein sequence ID" value="EAL66849"/>
    <property type="gene ID" value="DDB_G0281105"/>
</dbReference>
<dbReference type="GeneID" id="8622875"/>
<dbReference type="KEGG" id="ddi:DDB_G0281105"/>
<dbReference type="dictyBase" id="DDB_G0281105"/>
<dbReference type="VEuPathDB" id="AmoebaDB:DDB_G0281105"/>
<dbReference type="HOGENOM" id="CLU_1162935_0_0_1"/>
<dbReference type="InParanoid" id="Q54UF5"/>
<dbReference type="PRO" id="PR:Q54UF5"/>
<dbReference type="Proteomes" id="UP000002195">
    <property type="component" value="Chromosome 3"/>
</dbReference>
<dbReference type="GO" id="GO:0016020">
    <property type="term" value="C:membrane"/>
    <property type="evidence" value="ECO:0007669"/>
    <property type="project" value="UniProtKB-SubCell"/>
</dbReference>
<comment type="subcellular location">
    <subcellularLocation>
        <location evidence="3">Membrane</location>
        <topology evidence="3">Single-pass membrane protein</topology>
    </subcellularLocation>
</comment>
<keyword id="KW-0175">Coiled coil</keyword>
<keyword id="KW-0472">Membrane</keyword>
<keyword id="KW-1185">Reference proteome</keyword>
<keyword id="KW-0812">Transmembrane</keyword>
<keyword id="KW-1133">Transmembrane helix</keyword>
<reference key="1">
    <citation type="journal article" date="2005" name="Nature">
        <title>The genome of the social amoeba Dictyostelium discoideum.</title>
        <authorList>
            <person name="Eichinger L."/>
            <person name="Pachebat J.A."/>
            <person name="Gloeckner G."/>
            <person name="Rajandream M.A."/>
            <person name="Sucgang R."/>
            <person name="Berriman M."/>
            <person name="Song J."/>
            <person name="Olsen R."/>
            <person name="Szafranski K."/>
            <person name="Xu Q."/>
            <person name="Tunggal B."/>
            <person name="Kummerfeld S."/>
            <person name="Madera M."/>
            <person name="Konfortov B.A."/>
            <person name="Rivero F."/>
            <person name="Bankier A.T."/>
            <person name="Lehmann R."/>
            <person name="Hamlin N."/>
            <person name="Davies R."/>
            <person name="Gaudet P."/>
            <person name="Fey P."/>
            <person name="Pilcher K."/>
            <person name="Chen G."/>
            <person name="Saunders D."/>
            <person name="Sodergren E.J."/>
            <person name="Davis P."/>
            <person name="Kerhornou A."/>
            <person name="Nie X."/>
            <person name="Hall N."/>
            <person name="Anjard C."/>
            <person name="Hemphill L."/>
            <person name="Bason N."/>
            <person name="Farbrother P."/>
            <person name="Desany B."/>
            <person name="Just E."/>
            <person name="Morio T."/>
            <person name="Rost R."/>
            <person name="Churcher C.M."/>
            <person name="Cooper J."/>
            <person name="Haydock S."/>
            <person name="van Driessche N."/>
            <person name="Cronin A."/>
            <person name="Goodhead I."/>
            <person name="Muzny D.M."/>
            <person name="Mourier T."/>
            <person name="Pain A."/>
            <person name="Lu M."/>
            <person name="Harper D."/>
            <person name="Lindsay R."/>
            <person name="Hauser H."/>
            <person name="James K.D."/>
            <person name="Quiles M."/>
            <person name="Madan Babu M."/>
            <person name="Saito T."/>
            <person name="Buchrieser C."/>
            <person name="Wardroper A."/>
            <person name="Felder M."/>
            <person name="Thangavelu M."/>
            <person name="Johnson D."/>
            <person name="Knights A."/>
            <person name="Loulseged H."/>
            <person name="Mungall K.L."/>
            <person name="Oliver K."/>
            <person name="Price C."/>
            <person name="Quail M.A."/>
            <person name="Urushihara H."/>
            <person name="Hernandez J."/>
            <person name="Rabbinowitsch E."/>
            <person name="Steffen D."/>
            <person name="Sanders M."/>
            <person name="Ma J."/>
            <person name="Kohara Y."/>
            <person name="Sharp S."/>
            <person name="Simmonds M.N."/>
            <person name="Spiegler S."/>
            <person name="Tivey A."/>
            <person name="Sugano S."/>
            <person name="White B."/>
            <person name="Walker D."/>
            <person name="Woodward J.R."/>
            <person name="Winckler T."/>
            <person name="Tanaka Y."/>
            <person name="Shaulsky G."/>
            <person name="Schleicher M."/>
            <person name="Weinstock G.M."/>
            <person name="Rosenthal A."/>
            <person name="Cox E.C."/>
            <person name="Chisholm R.L."/>
            <person name="Gibbs R.A."/>
            <person name="Loomis W.F."/>
            <person name="Platzer M."/>
            <person name="Kay R.R."/>
            <person name="Williams J.G."/>
            <person name="Dear P.H."/>
            <person name="Noegel A.A."/>
            <person name="Barrell B.G."/>
            <person name="Kuspa A."/>
        </authorList>
    </citation>
    <scope>NUCLEOTIDE SEQUENCE [LARGE SCALE GENOMIC DNA]</scope>
    <source>
        <strain>AX4</strain>
    </source>
</reference>
<feature type="chain" id="PRO_0000352402" description="Putative uncharacterized transmembrane protein DDB_G0281105">
    <location>
        <begin position="1"/>
        <end position="239"/>
    </location>
</feature>
<feature type="transmembrane region" description="Helical" evidence="1">
    <location>
        <begin position="211"/>
        <end position="231"/>
    </location>
</feature>
<feature type="region of interest" description="Disordered" evidence="2">
    <location>
        <begin position="104"/>
        <end position="127"/>
    </location>
</feature>
<feature type="coiled-coil region" evidence="1">
    <location>
        <begin position="134"/>
        <end position="202"/>
    </location>
</feature>
<feature type="compositionally biased region" description="Low complexity" evidence="2">
    <location>
        <begin position="107"/>
        <end position="127"/>
    </location>
</feature>
<gene>
    <name type="ORF">DDB_G0281105</name>
</gene>
<proteinExistence type="predicted"/>
<accession>Q54UF5</accession>
<organism>
    <name type="scientific">Dictyostelium discoideum</name>
    <name type="common">Social amoeba</name>
    <dbReference type="NCBI Taxonomy" id="44689"/>
    <lineage>
        <taxon>Eukaryota</taxon>
        <taxon>Amoebozoa</taxon>
        <taxon>Evosea</taxon>
        <taxon>Eumycetozoa</taxon>
        <taxon>Dictyostelia</taxon>
        <taxon>Dictyosteliales</taxon>
        <taxon>Dictyosteliaceae</taxon>
        <taxon>Dictyostelium</taxon>
    </lineage>
</organism>
<evidence type="ECO:0000255" key="1"/>
<evidence type="ECO:0000256" key="2">
    <source>
        <dbReference type="SAM" id="MobiDB-lite"/>
    </source>
</evidence>
<evidence type="ECO:0000305" key="3"/>
<name>Y4017_DICDI</name>
<sequence>MKFIYLFKKESTLQNCINELKLKNPGKEIKIHCYFDFRVNGEDKKTTFCLLKLESNIEIPYETFEILNRKQFEKKFNGLENKLEIKNIPSTSSSPSSSQLFLTLPATSQSSQPKSTNSSTESSSIGQFKNQVDENEINLNKNKIDEFQKDVISLQQKVSSLFQQYNKENEKNKTLNQIFDIQNKIQKMQQQIHFIQNNQESFITLFINYKVKIGSAFIIYIFYNVLFFIIVRFNSFFFF</sequence>